<keyword id="KW-0002">3D-structure</keyword>
<keyword id="KW-1003">Cell membrane</keyword>
<keyword id="KW-1015">Disulfide bond</keyword>
<keyword id="KW-0297">G-protein coupled receptor</keyword>
<keyword id="KW-0325">Glycoprotein</keyword>
<keyword id="KW-0472">Membrane</keyword>
<keyword id="KW-0675">Receptor</keyword>
<keyword id="KW-1185">Reference proteome</keyword>
<keyword id="KW-0807">Transducer</keyword>
<keyword id="KW-0812">Transmembrane</keyword>
<keyword id="KW-1133">Transmembrane helix</keyword>
<comment type="function">
    <text evidence="6 7">Nonselective, high-affinity receptor for both orexin-A and orexin-B neuropeptides (PubMed:26950369, PubMed:9491897). Triggers an increase in cytoplasmic Ca(2+) levels in response to orexin-A binding (PubMed:26950369, PubMed:9491897).</text>
</comment>
<comment type="interaction">
    <interactant intactId="EBI-25884102">
        <id>O43614</id>
    </interactant>
    <interactant intactId="EBI-437708">
        <id>P62937</id>
        <label>PPIA</label>
    </interactant>
    <organismsDiffer>false</organismsDiffer>
    <experiments>3</experiments>
</comment>
<comment type="subcellular location">
    <subcellularLocation>
        <location evidence="6 7 8">Cell membrane</location>
        <topology evidence="5">Multi-pass membrane protein</topology>
    </subcellularLocation>
</comment>
<comment type="domain">
    <text evidence="6">The N-terminal region is required for orexin signaling.</text>
</comment>
<comment type="similarity">
    <text evidence="2">Belongs to the G-protein coupled receptor 1 family.</text>
</comment>
<gene>
    <name type="primary">HCRTR2</name>
</gene>
<organism>
    <name type="scientific">Homo sapiens</name>
    <name type="common">Human</name>
    <dbReference type="NCBI Taxonomy" id="9606"/>
    <lineage>
        <taxon>Eukaryota</taxon>
        <taxon>Metazoa</taxon>
        <taxon>Chordata</taxon>
        <taxon>Craniata</taxon>
        <taxon>Vertebrata</taxon>
        <taxon>Euteleostomi</taxon>
        <taxon>Mammalia</taxon>
        <taxon>Eutheria</taxon>
        <taxon>Euarchontoglires</taxon>
        <taxon>Primates</taxon>
        <taxon>Haplorrhini</taxon>
        <taxon>Catarrhini</taxon>
        <taxon>Hominidae</taxon>
        <taxon>Homo</taxon>
    </lineage>
</organism>
<name>OX2R_HUMAN</name>
<proteinExistence type="evidence at protein level"/>
<feature type="chain" id="PRO_0000069989" description="Orexin receptor type 2">
    <location>
        <begin position="1"/>
        <end position="444"/>
    </location>
</feature>
<feature type="topological domain" description="Extracellular" evidence="5 9">
    <location>
        <begin position="1"/>
        <end position="54"/>
    </location>
</feature>
<feature type="transmembrane region" description="Helical; Name=1" evidence="5">
    <location>
        <begin position="55"/>
        <end position="75"/>
    </location>
</feature>
<feature type="topological domain" description="Cytoplasmic" evidence="5">
    <location>
        <begin position="76"/>
        <end position="88"/>
    </location>
</feature>
<feature type="transmembrane region" description="Helical; Name=2" evidence="5">
    <location>
        <begin position="89"/>
        <end position="110"/>
    </location>
</feature>
<feature type="topological domain" description="Extracellular" evidence="5">
    <location>
        <begin position="111"/>
        <end position="127"/>
    </location>
</feature>
<feature type="transmembrane region" description="Helical; Name=3" evidence="5">
    <location>
        <begin position="128"/>
        <end position="150"/>
    </location>
</feature>
<feature type="topological domain" description="Cytoplasmic" evidence="5">
    <location>
        <begin position="151"/>
        <end position="170"/>
    </location>
</feature>
<feature type="transmembrane region" description="Helical; Name=4" evidence="5">
    <location>
        <begin position="171"/>
        <end position="191"/>
    </location>
</feature>
<feature type="topological domain" description="Extracellular" evidence="5">
    <location>
        <begin position="192"/>
        <end position="222"/>
    </location>
</feature>
<feature type="transmembrane region" description="Helical; Name=5" evidence="5">
    <location>
        <begin position="223"/>
        <end position="243"/>
    </location>
</feature>
<feature type="topological domain" description="Cytoplasmic" evidence="5">
    <location>
        <begin position="244"/>
        <end position="304"/>
    </location>
</feature>
<feature type="transmembrane region" description="Helical; Name=6" evidence="5">
    <location>
        <begin position="305"/>
        <end position="326"/>
    </location>
</feature>
<feature type="topological domain" description="Extracellular" evidence="5">
    <location>
        <begin position="327"/>
        <end position="342"/>
    </location>
</feature>
<feature type="transmembrane region" description="Helical; Name=7" evidence="5">
    <location>
        <begin position="343"/>
        <end position="366"/>
    </location>
</feature>
<feature type="topological domain" description="Cytoplasmic" evidence="5">
    <location>
        <begin position="367"/>
        <end position="444"/>
    </location>
</feature>
<feature type="region of interest" description="Disordered" evidence="3">
    <location>
        <begin position="1"/>
        <end position="20"/>
    </location>
</feature>
<feature type="region of interest" description="Required for response to orexin-A" evidence="6">
    <location>
        <begin position="33"/>
        <end position="49"/>
    </location>
</feature>
<feature type="compositionally biased region" description="Basic and acidic residues" evidence="3">
    <location>
        <begin position="1"/>
        <end position="10"/>
    </location>
</feature>
<feature type="binding site" evidence="5 10">
    <location>
        <position position="324"/>
    </location>
    <ligand>
        <name>suvorexant</name>
        <dbReference type="ChEBI" id="CHEBI:82698"/>
        <note>antagonist</note>
    </ligand>
</feature>
<feature type="site" description="Important for responses to orexin" evidence="6">
    <location>
        <position position="44"/>
    </location>
</feature>
<feature type="glycosylation site" description="N-linked (GlcNAc...) asparagine" evidence="1">
    <location>
        <position position="14"/>
    </location>
</feature>
<feature type="glycosylation site" description="N-linked (GlcNAc...) asparagine" evidence="1">
    <location>
        <position position="22"/>
    </location>
</feature>
<feature type="glycosylation site" description="N-linked (GlcNAc...) asparagine" evidence="1">
    <location>
        <position position="202"/>
    </location>
</feature>
<feature type="disulfide bond" evidence="10">
    <location>
        <begin position="127"/>
        <end position="210"/>
    </location>
</feature>
<feature type="sequence variant" id="VAR_044507" description="In dbSNP:rs41271310." evidence="4">
    <original>P</original>
    <variation>S</variation>
    <location>
        <position position="10"/>
    </location>
</feature>
<feature type="sequence variant" id="VAR_044508" description="In dbSNP:rs41271312." evidence="4">
    <original>P</original>
    <variation>T</variation>
    <location>
        <position position="11"/>
    </location>
</feature>
<feature type="sequence variant" id="VAR_044509" description="In dbSNP:rs74720027." evidence="4">
    <original>I</original>
    <variation>V</variation>
    <location>
        <position position="293"/>
    </location>
</feature>
<feature type="sequence variant" id="VAR_044510" description="In dbSNP:rs2653349." evidence="4 7">
    <original>I</original>
    <variation>V</variation>
    <location>
        <position position="308"/>
    </location>
</feature>
<feature type="mutagenesis site" description="Abolishes response to orexin-A." evidence="6">
    <location>
        <begin position="33"/>
        <end position="49"/>
    </location>
</feature>
<feature type="mutagenesis site" description="Abolishes response to orexin-A." evidence="6">
    <original>W</original>
    <variation>N</variation>
    <location>
        <position position="44"/>
    </location>
</feature>
<feature type="mutagenesis site" description="Strongly impairs response to orexin-A." evidence="6">
    <original>N</original>
    <variation>A</variation>
    <location>
        <position position="324"/>
    </location>
</feature>
<feature type="helix" evidence="13">
    <location>
        <begin position="40"/>
        <end position="47"/>
    </location>
</feature>
<feature type="helix" evidence="13">
    <location>
        <begin position="54"/>
        <end position="81"/>
    </location>
</feature>
<feature type="helix" evidence="13">
    <location>
        <begin position="83"/>
        <end position="85"/>
    </location>
</feature>
<feature type="helix" evidence="13">
    <location>
        <begin position="88"/>
        <end position="106"/>
    </location>
</feature>
<feature type="helix" evidence="13">
    <location>
        <begin position="108"/>
        <end position="117"/>
    </location>
</feature>
<feature type="helix" evidence="13">
    <location>
        <begin position="123"/>
        <end position="156"/>
    </location>
</feature>
<feature type="strand" evidence="13">
    <location>
        <begin position="158"/>
        <end position="160"/>
    </location>
</feature>
<feature type="helix" evidence="13">
    <location>
        <begin position="166"/>
        <end position="183"/>
    </location>
</feature>
<feature type="helix" evidence="13">
    <location>
        <begin position="185"/>
        <end position="190"/>
    </location>
</feature>
<feature type="strand" evidence="13">
    <location>
        <begin position="191"/>
        <end position="196"/>
    </location>
</feature>
<feature type="strand" evidence="14">
    <location>
        <begin position="199"/>
        <end position="202"/>
    </location>
</feature>
<feature type="strand" evidence="13">
    <location>
        <begin position="207"/>
        <end position="212"/>
    </location>
</feature>
<feature type="strand" evidence="13">
    <location>
        <begin position="215"/>
        <end position="217"/>
    </location>
</feature>
<feature type="helix" evidence="13">
    <location>
        <begin position="218"/>
        <end position="231"/>
    </location>
</feature>
<feature type="helix" evidence="13">
    <location>
        <begin position="233"/>
        <end position="251"/>
    </location>
</feature>
<feature type="turn" evidence="15">
    <location>
        <begin position="252"/>
        <end position="254"/>
    </location>
</feature>
<feature type="helix" evidence="13">
    <location>
        <begin position="294"/>
        <end position="328"/>
    </location>
</feature>
<feature type="turn" evidence="13">
    <location>
        <begin position="332"/>
        <end position="335"/>
    </location>
</feature>
<feature type="helix" evidence="13">
    <location>
        <begin position="339"/>
        <end position="367"/>
    </location>
</feature>
<feature type="helix" evidence="13">
    <location>
        <begin position="369"/>
        <end position="381"/>
    </location>
</feature>
<protein>
    <recommendedName>
        <fullName>Orexin receptor type 2</fullName>
        <shortName>Ox-2-R</shortName>
        <shortName>Ox2-R</shortName>
        <shortName>Ox2R</shortName>
    </recommendedName>
    <alternativeName>
        <fullName>Hypocretin receptor type 2</fullName>
    </alternativeName>
</protein>
<evidence type="ECO:0000255" key="1"/>
<evidence type="ECO:0000255" key="2">
    <source>
        <dbReference type="PROSITE-ProRule" id="PRU00521"/>
    </source>
</evidence>
<evidence type="ECO:0000256" key="3">
    <source>
        <dbReference type="SAM" id="MobiDB-lite"/>
    </source>
</evidence>
<evidence type="ECO:0000269" key="4">
    <source>
    </source>
</evidence>
<evidence type="ECO:0000269" key="5">
    <source>
    </source>
</evidence>
<evidence type="ECO:0000269" key="6">
    <source>
    </source>
</evidence>
<evidence type="ECO:0000269" key="7">
    <source>
    </source>
</evidence>
<evidence type="ECO:0000305" key="8">
    <source>
    </source>
</evidence>
<evidence type="ECO:0000305" key="9">
    <source>
    </source>
</evidence>
<evidence type="ECO:0007744" key="10">
    <source>
        <dbReference type="PDB" id="4S0V"/>
    </source>
</evidence>
<evidence type="ECO:0007744" key="11">
    <source>
        <dbReference type="PDB" id="7L1U"/>
    </source>
</evidence>
<evidence type="ECO:0007744" key="12">
    <source>
        <dbReference type="PDB" id="7L1V"/>
    </source>
</evidence>
<evidence type="ECO:0007829" key="13">
    <source>
        <dbReference type="PDB" id="5WQC"/>
    </source>
</evidence>
<evidence type="ECO:0007829" key="14">
    <source>
        <dbReference type="PDB" id="5WS3"/>
    </source>
</evidence>
<evidence type="ECO:0007829" key="15">
    <source>
        <dbReference type="PDB" id="6TPN"/>
    </source>
</evidence>
<accession>O43614</accession>
<accession>Q5VTM0</accession>
<reference key="1">
    <citation type="journal article" date="1998" name="Cell">
        <title>Orexins and orexin receptors: a family of hypothalamic neuropeptides and G protein-coupled receptors that regulate feeding behavior.</title>
        <authorList>
            <person name="Sakurai T."/>
            <person name="Amemiya A."/>
            <person name="Ishii M."/>
            <person name="Matsuzaki I."/>
            <person name="Chemelli R.M."/>
            <person name="Tanaka H."/>
            <person name="Williams S.C."/>
            <person name="Richardson J.A."/>
            <person name="Kozlowski G.P."/>
            <person name="Wilson S."/>
            <person name="Arch J.R.S."/>
            <person name="Buckingham R.E."/>
            <person name="Haynes A.C."/>
            <person name="Carr S.A."/>
            <person name="Annan R.S."/>
            <person name="McNulty D.E."/>
            <person name="Liu W.-S."/>
            <person name="Terrett J.A."/>
            <person name="Elshourbagy N.A."/>
            <person name="Bergsma D.J."/>
            <person name="Yanagisawa M."/>
        </authorList>
    </citation>
    <scope>NUCLEOTIDE SEQUENCE [MRNA]</scope>
    <scope>FUNCTION</scope>
    <scope>SUBCELLULAR LOCATION</scope>
    <scope>VARIANT VAL-308</scope>
</reference>
<reference key="2">
    <citation type="journal article" date="2001" name="Neurology">
        <title>Polymorphisms in hypocretin/orexin pathway genes and narcolepsy.</title>
        <authorList>
            <person name="Olafsdottir B.R."/>
            <person name="Rye D.B."/>
            <person name="Scammell T.E."/>
            <person name="Matheson J.K."/>
            <person name="Stefansson K."/>
            <person name="Gulcher J.R."/>
        </authorList>
    </citation>
    <scope>NUCLEOTIDE SEQUENCE [GENOMIC DNA]</scope>
    <scope>VARIANTS SER-10; THR-11; VAL-293 AND VAL-308</scope>
</reference>
<reference key="3">
    <citation type="journal article" date="2003" name="Nature">
        <title>The DNA sequence and analysis of human chromosome 6.</title>
        <authorList>
            <person name="Mungall A.J."/>
            <person name="Palmer S.A."/>
            <person name="Sims S.K."/>
            <person name="Edwards C.A."/>
            <person name="Ashurst J.L."/>
            <person name="Wilming L."/>
            <person name="Jones M.C."/>
            <person name="Horton R."/>
            <person name="Hunt S.E."/>
            <person name="Scott C.E."/>
            <person name="Gilbert J.G.R."/>
            <person name="Clamp M.E."/>
            <person name="Bethel G."/>
            <person name="Milne S."/>
            <person name="Ainscough R."/>
            <person name="Almeida J.P."/>
            <person name="Ambrose K.D."/>
            <person name="Andrews T.D."/>
            <person name="Ashwell R.I.S."/>
            <person name="Babbage A.K."/>
            <person name="Bagguley C.L."/>
            <person name="Bailey J."/>
            <person name="Banerjee R."/>
            <person name="Barker D.J."/>
            <person name="Barlow K.F."/>
            <person name="Bates K."/>
            <person name="Beare D.M."/>
            <person name="Beasley H."/>
            <person name="Beasley O."/>
            <person name="Bird C.P."/>
            <person name="Blakey S.E."/>
            <person name="Bray-Allen S."/>
            <person name="Brook J."/>
            <person name="Brown A.J."/>
            <person name="Brown J.Y."/>
            <person name="Burford D.C."/>
            <person name="Burrill W."/>
            <person name="Burton J."/>
            <person name="Carder C."/>
            <person name="Carter N.P."/>
            <person name="Chapman J.C."/>
            <person name="Clark S.Y."/>
            <person name="Clark G."/>
            <person name="Clee C.M."/>
            <person name="Clegg S."/>
            <person name="Cobley V."/>
            <person name="Collier R.E."/>
            <person name="Collins J.E."/>
            <person name="Colman L.K."/>
            <person name="Corby N.R."/>
            <person name="Coville G.J."/>
            <person name="Culley K.M."/>
            <person name="Dhami P."/>
            <person name="Davies J."/>
            <person name="Dunn M."/>
            <person name="Earthrowl M.E."/>
            <person name="Ellington A.E."/>
            <person name="Evans K.A."/>
            <person name="Faulkner L."/>
            <person name="Francis M.D."/>
            <person name="Frankish A."/>
            <person name="Frankland J."/>
            <person name="French L."/>
            <person name="Garner P."/>
            <person name="Garnett J."/>
            <person name="Ghori M.J."/>
            <person name="Gilby L.M."/>
            <person name="Gillson C.J."/>
            <person name="Glithero R.J."/>
            <person name="Grafham D.V."/>
            <person name="Grant M."/>
            <person name="Gribble S."/>
            <person name="Griffiths C."/>
            <person name="Griffiths M.N.D."/>
            <person name="Hall R."/>
            <person name="Halls K.S."/>
            <person name="Hammond S."/>
            <person name="Harley J.L."/>
            <person name="Hart E.A."/>
            <person name="Heath P.D."/>
            <person name="Heathcott R."/>
            <person name="Holmes S.J."/>
            <person name="Howden P.J."/>
            <person name="Howe K.L."/>
            <person name="Howell G.R."/>
            <person name="Huckle E."/>
            <person name="Humphray S.J."/>
            <person name="Humphries M.D."/>
            <person name="Hunt A.R."/>
            <person name="Johnson C.M."/>
            <person name="Joy A.A."/>
            <person name="Kay M."/>
            <person name="Keenan S.J."/>
            <person name="Kimberley A.M."/>
            <person name="King A."/>
            <person name="Laird G.K."/>
            <person name="Langford C."/>
            <person name="Lawlor S."/>
            <person name="Leongamornlert D.A."/>
            <person name="Leversha M."/>
            <person name="Lloyd C.R."/>
            <person name="Lloyd D.M."/>
            <person name="Loveland J.E."/>
            <person name="Lovell J."/>
            <person name="Martin S."/>
            <person name="Mashreghi-Mohammadi M."/>
            <person name="Maslen G.L."/>
            <person name="Matthews L."/>
            <person name="McCann O.T."/>
            <person name="McLaren S.J."/>
            <person name="McLay K."/>
            <person name="McMurray A."/>
            <person name="Moore M.J.F."/>
            <person name="Mullikin J.C."/>
            <person name="Niblett D."/>
            <person name="Nickerson T."/>
            <person name="Novik K.L."/>
            <person name="Oliver K."/>
            <person name="Overton-Larty E.K."/>
            <person name="Parker A."/>
            <person name="Patel R."/>
            <person name="Pearce A.V."/>
            <person name="Peck A.I."/>
            <person name="Phillimore B.J.C.T."/>
            <person name="Phillips S."/>
            <person name="Plumb R.W."/>
            <person name="Porter K.M."/>
            <person name="Ramsey Y."/>
            <person name="Ranby S.A."/>
            <person name="Rice C.M."/>
            <person name="Ross M.T."/>
            <person name="Searle S.M."/>
            <person name="Sehra H.K."/>
            <person name="Sheridan E."/>
            <person name="Skuce C.D."/>
            <person name="Smith S."/>
            <person name="Smith M."/>
            <person name="Spraggon L."/>
            <person name="Squares S.L."/>
            <person name="Steward C.A."/>
            <person name="Sycamore N."/>
            <person name="Tamlyn-Hall G."/>
            <person name="Tester J."/>
            <person name="Theaker A.J."/>
            <person name="Thomas D.W."/>
            <person name="Thorpe A."/>
            <person name="Tracey A."/>
            <person name="Tromans A."/>
            <person name="Tubby B."/>
            <person name="Wall M."/>
            <person name="Wallis J.M."/>
            <person name="West A.P."/>
            <person name="White S.S."/>
            <person name="Whitehead S.L."/>
            <person name="Whittaker H."/>
            <person name="Wild A."/>
            <person name="Willey D.J."/>
            <person name="Wilmer T.E."/>
            <person name="Wood J.M."/>
            <person name="Wray P.W."/>
            <person name="Wyatt J.C."/>
            <person name="Young L."/>
            <person name="Younger R.M."/>
            <person name="Bentley D.R."/>
            <person name="Coulson A."/>
            <person name="Durbin R.M."/>
            <person name="Hubbard T."/>
            <person name="Sulston J.E."/>
            <person name="Dunham I."/>
            <person name="Rogers J."/>
            <person name="Beck S."/>
        </authorList>
    </citation>
    <scope>NUCLEOTIDE SEQUENCE [LARGE SCALE GENOMIC DNA]</scope>
</reference>
<reference key="4">
    <citation type="submission" date="2005-07" db="EMBL/GenBank/DDBJ databases">
        <authorList>
            <person name="Mural R.J."/>
            <person name="Istrail S."/>
            <person name="Sutton G.G."/>
            <person name="Florea L."/>
            <person name="Halpern A.L."/>
            <person name="Mobarry C.M."/>
            <person name="Lippert R."/>
            <person name="Walenz B."/>
            <person name="Shatkay H."/>
            <person name="Dew I."/>
            <person name="Miller J.R."/>
            <person name="Flanigan M.J."/>
            <person name="Edwards N.J."/>
            <person name="Bolanos R."/>
            <person name="Fasulo D."/>
            <person name="Halldorsson B.V."/>
            <person name="Hannenhalli S."/>
            <person name="Turner R."/>
            <person name="Yooseph S."/>
            <person name="Lu F."/>
            <person name="Nusskern D.R."/>
            <person name="Shue B.C."/>
            <person name="Zheng X.H."/>
            <person name="Zhong F."/>
            <person name="Delcher A.L."/>
            <person name="Huson D.H."/>
            <person name="Kravitz S.A."/>
            <person name="Mouchard L."/>
            <person name="Reinert K."/>
            <person name="Remington K.A."/>
            <person name="Clark A.G."/>
            <person name="Waterman M.S."/>
            <person name="Eichler E.E."/>
            <person name="Adams M.D."/>
            <person name="Hunkapiller M.W."/>
            <person name="Myers E.W."/>
            <person name="Venter J.C."/>
        </authorList>
    </citation>
    <scope>NUCLEOTIDE SEQUENCE [LARGE SCALE GENOMIC DNA]</scope>
</reference>
<reference key="5">
    <citation type="journal article" date="2001" name="Bioessays">
        <title>Hypocretin/orexin, sleep and narcolepsy.</title>
        <authorList>
            <person name="Hungs M."/>
            <person name="Mignot E."/>
        </authorList>
    </citation>
    <scope>REVIEW</scope>
</reference>
<reference key="6">
    <citation type="journal article" date="2001" name="Annu. Rev. Neurosci.">
        <title>To eat or to sleep? Orexin in the regulation of feeding and wakefulness.</title>
        <authorList>
            <person name="Willie J.T."/>
            <person name="Chemelli R.M."/>
            <person name="Sinton C.M."/>
            <person name="Yanagisawa M."/>
        </authorList>
    </citation>
    <scope>REVIEW</scope>
</reference>
<reference key="7">
    <citation type="journal article" date="2016" name="Nat. Struct. Mol. Biol.">
        <title>Structure and ligand-binding mechanism of the human OX1 and OX2 orexin receptors.</title>
        <authorList>
            <person name="Yin J."/>
            <person name="Babaoglu K."/>
            <person name="Brautigam C.A."/>
            <person name="Clark L."/>
            <person name="Shao Z."/>
            <person name="Scheuermann T.H."/>
            <person name="Harrell C.M."/>
            <person name="Gotter A.L."/>
            <person name="Roecker A.J."/>
            <person name="Winrow C.J."/>
            <person name="Renger J.J."/>
            <person name="Coleman P.J."/>
            <person name="Rosenbaum D.M."/>
        </authorList>
    </citation>
    <scope>FUNCTION</scope>
    <scope>SUBCELLULAR LOCATION</scope>
    <scope>TOPOLOGY</scope>
    <scope>MUTAGENESIS OF 33-ASP--HIS-49; TRP-44 AND ASN-324</scope>
    <scope>DOMAIN</scope>
</reference>
<reference evidence="10" key="8">
    <citation type="journal article" date="2015" name="Nature">
        <title>Crystal structure of the human OX2 orexin receptor bound to the insomnia drug suvorexant.</title>
        <authorList>
            <person name="Yin J."/>
            <person name="Mobarec J.C."/>
            <person name="Kolb P."/>
            <person name="Rosenbaum D.M."/>
        </authorList>
    </citation>
    <scope>X-RAY CRYSTALLOGRAPHY (2.50 ANGSTROMS) OF 3-254 AND 294-388 IN COMPLEX WITH THE INHIBITOR SUVOREXANT</scope>
    <scope>TOPOLOGY</scope>
    <scope>SUBCELLULAR LOCATION</scope>
    <scope>DISULFIDE BONDS</scope>
</reference>
<reference evidence="11 12" key="9">
    <citation type="journal article" date="2021" name="Nat. Commun.">
        <title>Structures of active-state orexin receptor 2 rationalize peptide and small-molecule agonist recognition and receptor activation.</title>
        <authorList>
            <person name="Hong C."/>
            <person name="Byrne N.J."/>
            <person name="Zamlynny B."/>
            <person name="Tummala S."/>
            <person name="Xiao L."/>
            <person name="Shipman J.M."/>
            <person name="Partridge A.T."/>
            <person name="Minnick C."/>
            <person name="Breslin M.J."/>
            <person name="Rudd M.T."/>
            <person name="Stachel S.J."/>
            <person name="Rada V.L."/>
            <person name="Kern J.C."/>
            <person name="Armacost K.A."/>
            <person name="Hollingsworth S.A."/>
            <person name="O'Brien J.A."/>
            <person name="Hall D.L."/>
            <person name="McDonald T.P."/>
            <person name="Strickland C."/>
            <person name="Brooun A."/>
            <person name="Soisson S.M."/>
            <person name="Hollenstein K."/>
        </authorList>
    </citation>
    <scope>STRUCTURE BY ELECTRON MICROSCOPY (3.00 ANGSTROMS) OF 3-389 IN COMPLEX WITH HCRT 70-97</scope>
</reference>
<sequence>MSGTKLEDSPPCRNWSSASELNETQEPFLNPTDYDDEEFLRYLWREYLHPKEYEWVLIAGYIIVFVVALIGNVLVCVAVWKNHHMRTVTNYFIVNLSLADVLVTITCLPATLVVDITETWFFGQSLCKVIPYLQTVSVSVSVLTLSCIALDRWYAICHPLMFKSTAKRARNSIVIIWIVSCIIMIPQAIVMECSTVFPGLANKTTLFTVCDERWGGEIYPKMYHICFFLVTYMAPLCLMVLAYLQIFRKLWCRQIPGTSSVVQRKWKPLQPVSQPRGPGQPTKSRMSAVAAEIKQIRARRKTARMLMIVLLVFAICYLPISILNVLKRVFGMFAHTEDRETVYAWFTFSHWLVYANSAANPIIYNFLSGKFREEFKAAFSCCCLGVHHRQEDRLTRGRTSTESRKSLTTQISNFDNISKLSEQVVLTSISTLPAANGAGPLQNW</sequence>
<dbReference type="EMBL" id="AF041245">
    <property type="protein sequence ID" value="AAC39602.1"/>
    <property type="molecule type" value="mRNA"/>
</dbReference>
<dbReference type="EMBL" id="AY062031">
    <property type="protein sequence ID" value="AAL47215.1"/>
    <property type="molecule type" value="Genomic_DNA"/>
</dbReference>
<dbReference type="EMBL" id="AL591718">
    <property type="status" value="NOT_ANNOTATED_CDS"/>
    <property type="molecule type" value="Genomic_DNA"/>
</dbReference>
<dbReference type="EMBL" id="AL449104">
    <property type="status" value="NOT_ANNOTATED_CDS"/>
    <property type="molecule type" value="Genomic_DNA"/>
</dbReference>
<dbReference type="EMBL" id="CH471081">
    <property type="protein sequence ID" value="EAX04440.1"/>
    <property type="molecule type" value="Genomic_DNA"/>
</dbReference>
<dbReference type="CCDS" id="CCDS4956.1"/>
<dbReference type="RefSeq" id="NP_001371201.1">
    <property type="nucleotide sequence ID" value="NM_001384272.1"/>
</dbReference>
<dbReference type="RefSeq" id="NP_001517.2">
    <property type="nucleotide sequence ID" value="NM_001526.5"/>
</dbReference>
<dbReference type="PDB" id="4S0V">
    <property type="method" value="X-ray"/>
    <property type="resolution" value="2.50 A"/>
    <property type="chains" value="A=3-254, A=294-388"/>
</dbReference>
<dbReference type="PDB" id="5WQC">
    <property type="method" value="X-ray"/>
    <property type="resolution" value="1.96 A"/>
    <property type="chains" value="A=3-254, A=294-386"/>
</dbReference>
<dbReference type="PDB" id="5WS3">
    <property type="method" value="X-ray"/>
    <property type="resolution" value="2.30 A"/>
    <property type="chains" value="A=3-254, A=294-388"/>
</dbReference>
<dbReference type="PDB" id="6TPG">
    <property type="method" value="X-ray"/>
    <property type="resolution" value="2.74 A"/>
    <property type="chains" value="A=1-254, A=294-307"/>
</dbReference>
<dbReference type="PDB" id="6TPJ">
    <property type="method" value="X-ray"/>
    <property type="resolution" value="2.74 A"/>
    <property type="chains" value="A/B=1-254, A/B=294-307"/>
</dbReference>
<dbReference type="PDB" id="6TPN">
    <property type="method" value="X-ray"/>
    <property type="resolution" value="2.61 A"/>
    <property type="chains" value="A=1-254, A=294-388"/>
</dbReference>
<dbReference type="PDB" id="7L1U">
    <property type="method" value="EM"/>
    <property type="resolution" value="3.20 A"/>
    <property type="chains" value="R=3-389"/>
</dbReference>
<dbReference type="PDB" id="7L1V">
    <property type="method" value="EM"/>
    <property type="resolution" value="3.00 A"/>
    <property type="chains" value="R=3-389"/>
</dbReference>
<dbReference type="PDB" id="7SQO">
    <property type="method" value="EM"/>
    <property type="resolution" value="3.17 A"/>
    <property type="chains" value="R=1-444"/>
</dbReference>
<dbReference type="PDB" id="7SR8">
    <property type="method" value="EM"/>
    <property type="resolution" value="3.30 A"/>
    <property type="chains" value="R=3-408"/>
</dbReference>
<dbReference type="PDB" id="7XRR">
    <property type="method" value="X-ray"/>
    <property type="resolution" value="2.89 A"/>
    <property type="chains" value="A=33-394"/>
</dbReference>
<dbReference type="PDBsum" id="4S0V"/>
<dbReference type="PDBsum" id="5WQC"/>
<dbReference type="PDBsum" id="5WS3"/>
<dbReference type="PDBsum" id="6TPG"/>
<dbReference type="PDBsum" id="6TPJ"/>
<dbReference type="PDBsum" id="6TPN"/>
<dbReference type="PDBsum" id="7L1U"/>
<dbReference type="PDBsum" id="7L1V"/>
<dbReference type="PDBsum" id="7SQO"/>
<dbReference type="PDBsum" id="7SR8"/>
<dbReference type="PDBsum" id="7XRR"/>
<dbReference type="EMDB" id="EMD-25389"/>
<dbReference type="SMR" id="O43614"/>
<dbReference type="BioGRID" id="109312">
    <property type="interactions" value="35"/>
</dbReference>
<dbReference type="CORUM" id="O43614"/>
<dbReference type="FunCoup" id="O43614">
    <property type="interactions" value="599"/>
</dbReference>
<dbReference type="IntAct" id="O43614">
    <property type="interactions" value="36"/>
</dbReference>
<dbReference type="STRING" id="9606.ENSP00000477548"/>
<dbReference type="BindingDB" id="O43614"/>
<dbReference type="ChEMBL" id="CHEMBL4792"/>
<dbReference type="DrugBank" id="DB15031">
    <property type="generic name" value="Daridorexant"/>
</dbReference>
<dbReference type="DrugBank" id="DB11951">
    <property type="generic name" value="Lemborexant"/>
</dbReference>
<dbReference type="DrugBank" id="DB09034">
    <property type="generic name" value="Suvorexant"/>
</dbReference>
<dbReference type="DrugCentral" id="O43614"/>
<dbReference type="GuidetoPHARMACOLOGY" id="322"/>
<dbReference type="GlyCosmos" id="O43614">
    <property type="glycosylation" value="3 sites, No reported glycans"/>
</dbReference>
<dbReference type="GlyGen" id="O43614">
    <property type="glycosylation" value="3 sites"/>
</dbReference>
<dbReference type="iPTMnet" id="O43614"/>
<dbReference type="PhosphoSitePlus" id="O43614"/>
<dbReference type="BioMuta" id="HCRTR2"/>
<dbReference type="MassIVE" id="O43614"/>
<dbReference type="PaxDb" id="9606-ENSP00000477548"/>
<dbReference type="PeptideAtlas" id="O43614"/>
<dbReference type="Antibodypedia" id="17332">
    <property type="antibodies" value="368 antibodies from 37 providers"/>
</dbReference>
<dbReference type="DNASU" id="3062"/>
<dbReference type="Ensembl" id="ENST00000370862.4">
    <property type="protein sequence ID" value="ENSP00000359899.3"/>
    <property type="gene ID" value="ENSG00000137252.10"/>
</dbReference>
<dbReference type="Ensembl" id="ENST00000615358.4">
    <property type="protein sequence ID" value="ENSP00000477548.1"/>
    <property type="gene ID" value="ENSG00000137252.10"/>
</dbReference>
<dbReference type="GeneID" id="3062"/>
<dbReference type="KEGG" id="hsa:3062"/>
<dbReference type="MANE-Select" id="ENST00000370862.4">
    <property type="protein sequence ID" value="ENSP00000359899.3"/>
    <property type="RefSeq nucleotide sequence ID" value="NM_001384272.1"/>
    <property type="RefSeq protein sequence ID" value="NP_001371201.1"/>
</dbReference>
<dbReference type="AGR" id="HGNC:4849"/>
<dbReference type="CTD" id="3062"/>
<dbReference type="DisGeNET" id="3062"/>
<dbReference type="GeneCards" id="HCRTR2"/>
<dbReference type="HGNC" id="HGNC:4849">
    <property type="gene designation" value="HCRTR2"/>
</dbReference>
<dbReference type="HPA" id="ENSG00000137252">
    <property type="expression patterns" value="Not detected"/>
</dbReference>
<dbReference type="MIM" id="602393">
    <property type="type" value="gene"/>
</dbReference>
<dbReference type="neXtProt" id="NX_O43614"/>
<dbReference type="OpenTargets" id="ENSG00000137252"/>
<dbReference type="PharmGKB" id="PA29223"/>
<dbReference type="VEuPathDB" id="HostDB:ENSG00000137252"/>
<dbReference type="eggNOG" id="KOG3656">
    <property type="taxonomic scope" value="Eukaryota"/>
</dbReference>
<dbReference type="GeneTree" id="ENSGT01130000278294"/>
<dbReference type="HOGENOM" id="CLU_009579_6_3_1"/>
<dbReference type="InParanoid" id="O43614"/>
<dbReference type="OMA" id="LHIPGMN"/>
<dbReference type="OrthoDB" id="9986530at2759"/>
<dbReference type="PAN-GO" id="O43614">
    <property type="GO annotations" value="3 GO annotations based on evolutionary models"/>
</dbReference>
<dbReference type="PhylomeDB" id="O43614"/>
<dbReference type="TreeFam" id="TF315303"/>
<dbReference type="PathwayCommons" id="O43614"/>
<dbReference type="Reactome" id="R-HSA-389397">
    <property type="pathway name" value="Orexin and neuropeptides FF and QRFP bind to their respective receptors"/>
</dbReference>
<dbReference type="Reactome" id="R-HSA-416476">
    <property type="pathway name" value="G alpha (q) signalling events"/>
</dbReference>
<dbReference type="SignaLink" id="O43614"/>
<dbReference type="SIGNOR" id="O43614"/>
<dbReference type="BioGRID-ORCS" id="3062">
    <property type="hits" value="15 hits in 1144 CRISPR screens"/>
</dbReference>
<dbReference type="ChiTaRS" id="HCRTR2">
    <property type="organism name" value="human"/>
</dbReference>
<dbReference type="EvolutionaryTrace" id="O43614"/>
<dbReference type="GeneWiki" id="Hypocretin_(orexin)_receptor_2"/>
<dbReference type="GenomeRNAi" id="3062"/>
<dbReference type="Pharos" id="O43614">
    <property type="development level" value="Tclin"/>
</dbReference>
<dbReference type="PRO" id="PR:O43614"/>
<dbReference type="Proteomes" id="UP000005640">
    <property type="component" value="Chromosome 6"/>
</dbReference>
<dbReference type="RNAct" id="O43614">
    <property type="molecule type" value="protein"/>
</dbReference>
<dbReference type="Bgee" id="ENSG00000137252">
    <property type="expression patterns" value="Expressed in male germ line stem cell (sensu Vertebrata) in testis and 39 other cell types or tissues"/>
</dbReference>
<dbReference type="ExpressionAtlas" id="O43614">
    <property type="expression patterns" value="baseline and differential"/>
</dbReference>
<dbReference type="GO" id="GO:0005654">
    <property type="term" value="C:nucleoplasm"/>
    <property type="evidence" value="ECO:0000314"/>
    <property type="project" value="HPA"/>
</dbReference>
<dbReference type="GO" id="GO:0005886">
    <property type="term" value="C:plasma membrane"/>
    <property type="evidence" value="ECO:0000314"/>
    <property type="project" value="UniProtKB"/>
</dbReference>
<dbReference type="GO" id="GO:0045202">
    <property type="term" value="C:synapse"/>
    <property type="evidence" value="ECO:0007669"/>
    <property type="project" value="GOC"/>
</dbReference>
<dbReference type="GO" id="GO:0008188">
    <property type="term" value="F:neuropeptide receptor activity"/>
    <property type="evidence" value="ECO:0000304"/>
    <property type="project" value="ProtInc"/>
</dbReference>
<dbReference type="GO" id="GO:0016499">
    <property type="term" value="F:orexin receptor activity"/>
    <property type="evidence" value="ECO:0000314"/>
    <property type="project" value="UniProtKB"/>
</dbReference>
<dbReference type="GO" id="GO:0017046">
    <property type="term" value="F:peptide hormone binding"/>
    <property type="evidence" value="ECO:0007669"/>
    <property type="project" value="Ensembl"/>
</dbReference>
<dbReference type="GO" id="GO:0032870">
    <property type="term" value="P:cellular response to hormone stimulus"/>
    <property type="evidence" value="ECO:0000318"/>
    <property type="project" value="GO_Central"/>
</dbReference>
<dbReference type="GO" id="GO:0007268">
    <property type="term" value="P:chemical synaptic transmission"/>
    <property type="evidence" value="ECO:0000304"/>
    <property type="project" value="ProtInc"/>
</dbReference>
<dbReference type="GO" id="GO:0022410">
    <property type="term" value="P:circadian sleep/wake cycle process"/>
    <property type="evidence" value="ECO:0007669"/>
    <property type="project" value="InterPro"/>
</dbReference>
<dbReference type="GO" id="GO:0007631">
    <property type="term" value="P:feeding behavior"/>
    <property type="evidence" value="ECO:0000304"/>
    <property type="project" value="ProtInc"/>
</dbReference>
<dbReference type="GO" id="GO:0040011">
    <property type="term" value="P:locomotion"/>
    <property type="evidence" value="ECO:0007669"/>
    <property type="project" value="Ensembl"/>
</dbReference>
<dbReference type="GO" id="GO:0007218">
    <property type="term" value="P:neuropeptide signaling pathway"/>
    <property type="evidence" value="ECO:0000314"/>
    <property type="project" value="UniProtKB"/>
</dbReference>
<dbReference type="GO" id="GO:0007200">
    <property type="term" value="P:phospholipase C-activating G protein-coupled receptor signaling pathway"/>
    <property type="evidence" value="ECO:0007669"/>
    <property type="project" value="Ensembl"/>
</dbReference>
<dbReference type="GO" id="GO:0010840">
    <property type="term" value="P:regulation of circadian sleep/wake cycle, wakefulness"/>
    <property type="evidence" value="ECO:0000250"/>
    <property type="project" value="UniProtKB"/>
</dbReference>
<dbReference type="GO" id="GO:0051480">
    <property type="term" value="P:regulation of cytosolic calcium ion concentration"/>
    <property type="evidence" value="ECO:0000314"/>
    <property type="project" value="UniProtKB"/>
</dbReference>
<dbReference type="CDD" id="cd15208">
    <property type="entry name" value="7tmA_OXR"/>
    <property type="match status" value="1"/>
</dbReference>
<dbReference type="FunFam" id="1.20.1070.10:FF:000075">
    <property type="entry name" value="orexin receptor type 2"/>
    <property type="match status" value="1"/>
</dbReference>
<dbReference type="Gene3D" id="1.20.1070.10">
    <property type="entry name" value="Rhodopsin 7-helix transmembrane proteins"/>
    <property type="match status" value="1"/>
</dbReference>
<dbReference type="InterPro" id="IPR000276">
    <property type="entry name" value="GPCR_Rhodpsn"/>
</dbReference>
<dbReference type="InterPro" id="IPR017452">
    <property type="entry name" value="GPCR_Rhodpsn_7TM"/>
</dbReference>
<dbReference type="InterPro" id="IPR000204">
    <property type="entry name" value="Orexin_rcpt"/>
</dbReference>
<dbReference type="InterPro" id="IPR004060">
    <property type="entry name" value="Orexin_rcpt_2"/>
</dbReference>
<dbReference type="PANTHER" id="PTHR45695:SF32">
    <property type="entry name" value="G PROTEIN-COUPLED RECEPTOR 15-LIKE"/>
    <property type="match status" value="1"/>
</dbReference>
<dbReference type="PANTHER" id="PTHR45695">
    <property type="entry name" value="LEUCOKININ RECEPTOR-RELATED"/>
    <property type="match status" value="1"/>
</dbReference>
<dbReference type="Pfam" id="PF00001">
    <property type="entry name" value="7tm_1"/>
    <property type="match status" value="1"/>
</dbReference>
<dbReference type="Pfam" id="PF03827">
    <property type="entry name" value="Orexin_rec2"/>
    <property type="match status" value="1"/>
</dbReference>
<dbReference type="PRINTS" id="PR00237">
    <property type="entry name" value="GPCRRHODOPSN"/>
</dbReference>
<dbReference type="PRINTS" id="PR01522">
    <property type="entry name" value="OREXIN2R"/>
</dbReference>
<dbReference type="PRINTS" id="PR01064">
    <property type="entry name" value="OREXINR"/>
</dbReference>
<dbReference type="SMART" id="SM01381">
    <property type="entry name" value="7TM_GPCR_Srsx"/>
    <property type="match status" value="1"/>
</dbReference>
<dbReference type="SUPFAM" id="SSF81321">
    <property type="entry name" value="Family A G protein-coupled receptor-like"/>
    <property type="match status" value="1"/>
</dbReference>
<dbReference type="PROSITE" id="PS00237">
    <property type="entry name" value="G_PROTEIN_RECEP_F1_1"/>
    <property type="match status" value="1"/>
</dbReference>
<dbReference type="PROSITE" id="PS50262">
    <property type="entry name" value="G_PROTEIN_RECEP_F1_2"/>
    <property type="match status" value="1"/>
</dbReference>